<organism>
    <name type="scientific">Homo sapiens</name>
    <name type="common">Human</name>
    <dbReference type="NCBI Taxonomy" id="9606"/>
    <lineage>
        <taxon>Eukaryota</taxon>
        <taxon>Metazoa</taxon>
        <taxon>Chordata</taxon>
        <taxon>Craniata</taxon>
        <taxon>Vertebrata</taxon>
        <taxon>Euteleostomi</taxon>
        <taxon>Mammalia</taxon>
        <taxon>Eutheria</taxon>
        <taxon>Euarchontoglires</taxon>
        <taxon>Primates</taxon>
        <taxon>Haplorrhini</taxon>
        <taxon>Catarrhini</taxon>
        <taxon>Hominidae</taxon>
        <taxon>Homo</taxon>
    </lineage>
</organism>
<protein>
    <recommendedName>
        <fullName evidence="3">Uncharacterized protein C11orf97</fullName>
    </recommendedName>
</protein>
<comment type="subcellular location">
    <subcellularLocation>
        <location evidence="1">Cytoplasm</location>
        <location evidence="1">Cytoskeleton</location>
        <location evidence="1">Cilium basal body</location>
    </subcellularLocation>
</comment>
<dbReference type="EMBL" id="AP000943">
    <property type="status" value="NOT_ANNOTATED_CDS"/>
    <property type="molecule type" value="Genomic_DNA"/>
</dbReference>
<dbReference type="EMBL" id="KF455449">
    <property type="status" value="NOT_ANNOTATED_CDS"/>
    <property type="molecule type" value="Genomic_DNA"/>
</dbReference>
<dbReference type="EMBL" id="KF455450">
    <property type="status" value="NOT_ANNOTATED_CDS"/>
    <property type="molecule type" value="Genomic_DNA"/>
</dbReference>
<dbReference type="CCDS" id="CCDS81618.1"/>
<dbReference type="RefSeq" id="NP_001177391.1">
    <property type="nucleotide sequence ID" value="NM_001190462.2"/>
</dbReference>
<dbReference type="FunCoup" id="A0A1B0GVM6">
    <property type="interactions" value="11"/>
</dbReference>
<dbReference type="STRING" id="9606.ENSP00000490577"/>
<dbReference type="BioMuta" id="C11orf97"/>
<dbReference type="PeptideAtlas" id="A0A1B0GVM6"/>
<dbReference type="DNASU" id="643037"/>
<dbReference type="Ensembl" id="ENST00000542198.3">
    <property type="protein sequence ID" value="ENSP00000490577.1"/>
    <property type="gene ID" value="ENSG00000257057.3"/>
</dbReference>
<dbReference type="GeneID" id="643037"/>
<dbReference type="KEGG" id="hsa:643037"/>
<dbReference type="MANE-Select" id="ENST00000542198.3">
    <property type="protein sequence ID" value="ENSP00000490577.1"/>
    <property type="RefSeq nucleotide sequence ID" value="NM_001190462.2"/>
    <property type="RefSeq protein sequence ID" value="NP_001177391.1"/>
</dbReference>
<dbReference type="AGR" id="HGNC:49544"/>
<dbReference type="CTD" id="643037"/>
<dbReference type="GeneCards" id="C11orf97"/>
<dbReference type="HGNC" id="HGNC:49544">
    <property type="gene designation" value="C11orf97"/>
</dbReference>
<dbReference type="HPA" id="ENSG00000257057">
    <property type="expression patterns" value="Group enriched (brain, choroid plexus, fallopian tube, testis)"/>
</dbReference>
<dbReference type="neXtProt" id="NX_A0A1B0GVM6"/>
<dbReference type="OpenTargets" id="ENSG00000257057"/>
<dbReference type="VEuPathDB" id="HostDB:ENSG00000257057"/>
<dbReference type="GeneTree" id="ENSGT00520000058823"/>
<dbReference type="InParanoid" id="A0A1B0GVM6"/>
<dbReference type="OMA" id="HIKRDEC"/>
<dbReference type="OrthoDB" id="6154260at2759"/>
<dbReference type="PAN-GO" id="A0A1B0GVM6">
    <property type="GO annotations" value="1 GO annotation based on evolutionary models"/>
</dbReference>
<dbReference type="PathwayCommons" id="A0A1B0GVM6"/>
<dbReference type="SignaLink" id="A0A1B0GVM6"/>
<dbReference type="BioGRID-ORCS" id="643037">
    <property type="hits" value="11 hits in 215 CRISPR screens"/>
</dbReference>
<dbReference type="GenomeRNAi" id="643037"/>
<dbReference type="Pharos" id="A0A1B0GVM6">
    <property type="development level" value="Tdark"/>
</dbReference>
<dbReference type="PRO" id="PR:A0A1B0GVM6"/>
<dbReference type="Proteomes" id="UP000005640">
    <property type="component" value="Chromosome 11"/>
</dbReference>
<dbReference type="RNAct" id="A0A1B0GVM6">
    <property type="molecule type" value="protein"/>
</dbReference>
<dbReference type="Bgee" id="ENSG00000257057">
    <property type="expression patterns" value="Expressed in bronchial epithelial cell and 71 other cell types or tissues"/>
</dbReference>
<dbReference type="GO" id="GO:0036064">
    <property type="term" value="C:ciliary basal body"/>
    <property type="evidence" value="ECO:0000250"/>
    <property type="project" value="UniProtKB"/>
</dbReference>
<dbReference type="GO" id="GO:0097546">
    <property type="term" value="C:ciliary base"/>
    <property type="evidence" value="ECO:0000318"/>
    <property type="project" value="GO_Central"/>
</dbReference>
<dbReference type="GO" id="GO:0005737">
    <property type="term" value="C:cytoplasm"/>
    <property type="evidence" value="ECO:0007669"/>
    <property type="project" value="UniProtKB-KW"/>
</dbReference>
<dbReference type="InterPro" id="IPR040429">
    <property type="entry name" value="C11orf97-like"/>
</dbReference>
<dbReference type="PANTHER" id="PTHR38326">
    <property type="entry name" value="CHROMOSOME 11 OPEN READING FRAME 97"/>
    <property type="match status" value="1"/>
</dbReference>
<dbReference type="PANTHER" id="PTHR38326:SF1">
    <property type="entry name" value="CHROMOSOME 11 OPEN READING FRAME 97"/>
    <property type="match status" value="1"/>
</dbReference>
<proteinExistence type="inferred from homology"/>
<feature type="chain" id="PRO_0000440043" description="Uncharacterized protein C11orf97">
    <location>
        <begin position="1"/>
        <end position="126"/>
    </location>
</feature>
<feature type="region of interest" description="Disordered" evidence="2">
    <location>
        <begin position="13"/>
        <end position="45"/>
    </location>
</feature>
<sequence>MTGEEAVVVTAVVAPKAGREEEQPPPPAGLGCGARGEPGRGPLEHGQQWKKFLYCEPHKRIKEVLEEERHIKRDECHIKNPAAVALEGIWSIKRNLPVGGLKPGLPSRNSLLPQAKYYSRHGGLRR</sequence>
<reference key="1">
    <citation type="journal article" date="2006" name="Nature">
        <title>Human chromosome 11 DNA sequence and analysis including novel gene identification.</title>
        <authorList>
            <person name="Taylor T.D."/>
            <person name="Noguchi H."/>
            <person name="Totoki Y."/>
            <person name="Toyoda A."/>
            <person name="Kuroki Y."/>
            <person name="Dewar K."/>
            <person name="Lloyd C."/>
            <person name="Itoh T."/>
            <person name="Takeda T."/>
            <person name="Kim D.-W."/>
            <person name="She X."/>
            <person name="Barlow K.F."/>
            <person name="Bloom T."/>
            <person name="Bruford E."/>
            <person name="Chang J.L."/>
            <person name="Cuomo C.A."/>
            <person name="Eichler E."/>
            <person name="FitzGerald M.G."/>
            <person name="Jaffe D.B."/>
            <person name="LaButti K."/>
            <person name="Nicol R."/>
            <person name="Park H.-S."/>
            <person name="Seaman C."/>
            <person name="Sougnez C."/>
            <person name="Yang X."/>
            <person name="Zimmer A.R."/>
            <person name="Zody M.C."/>
            <person name="Birren B.W."/>
            <person name="Nusbaum C."/>
            <person name="Fujiyama A."/>
            <person name="Hattori M."/>
            <person name="Rogers J."/>
            <person name="Lander E.S."/>
            <person name="Sakaki Y."/>
        </authorList>
    </citation>
    <scope>NUCLEOTIDE SEQUENCE [LARGE SCALE GENOMIC DNA]</scope>
</reference>
<gene>
    <name evidence="4" type="primary">C11orf97</name>
</gene>
<accession>A0A1B0GVM6</accession>
<keyword id="KW-0966">Cell projection</keyword>
<keyword id="KW-0963">Cytoplasm</keyword>
<keyword id="KW-0206">Cytoskeleton</keyword>
<keyword id="KW-1185">Reference proteome</keyword>
<name>CK097_HUMAN</name>
<evidence type="ECO:0000250" key="1">
    <source>
        <dbReference type="UniProtKB" id="Q9DAE7"/>
    </source>
</evidence>
<evidence type="ECO:0000256" key="2">
    <source>
        <dbReference type="SAM" id="MobiDB-lite"/>
    </source>
</evidence>
<evidence type="ECO:0000305" key="3"/>
<evidence type="ECO:0000312" key="4">
    <source>
        <dbReference type="HGNC" id="HGNC:49544"/>
    </source>
</evidence>